<sequence>MVKEMKETINIFNTKTTEEVAQYLLGMYLEHETATGVLGGYIVDAEAYLGPDDEAAHSFGLRKTPRLQAMYDKPGTIYLYTMHTHLILNMVTQEQGKPQGVMIRAIEPVEGVDKMIENRQGRQGVELTNGPGKLVAALGIDKQLYGQSIFSSSLRLVPEKRKFPKKIEALPRIGIPNKGRWTELPLRYVVAGNPYISKQKRTAVDQIDFGWKDEENEKSNNAHILRGTT</sequence>
<feature type="chain" id="PRO_0000100086" description="Putative 3-methyladenine DNA glycosylase">
    <location>
        <begin position="1"/>
        <end position="229"/>
    </location>
</feature>
<comment type="similarity">
    <text evidence="1">Belongs to the DNA glycosylase MPG family.</text>
</comment>
<reference key="1">
    <citation type="journal article" date="2003" name="Science">
        <title>Role of mobile DNA in the evolution of vancomycin-resistant Enterococcus faecalis.</title>
        <authorList>
            <person name="Paulsen I.T."/>
            <person name="Banerjei L."/>
            <person name="Myers G.S.A."/>
            <person name="Nelson K.E."/>
            <person name="Seshadri R."/>
            <person name="Read T.D."/>
            <person name="Fouts D.E."/>
            <person name="Eisen J.A."/>
            <person name="Gill S.R."/>
            <person name="Heidelberg J.F."/>
            <person name="Tettelin H."/>
            <person name="Dodson R.J."/>
            <person name="Umayam L.A."/>
            <person name="Brinkac L.M."/>
            <person name="Beanan M.J."/>
            <person name="Daugherty S.C."/>
            <person name="DeBoy R.T."/>
            <person name="Durkin S.A."/>
            <person name="Kolonay J.F."/>
            <person name="Madupu R."/>
            <person name="Nelson W.C."/>
            <person name="Vamathevan J.J."/>
            <person name="Tran B."/>
            <person name="Upton J."/>
            <person name="Hansen T."/>
            <person name="Shetty J."/>
            <person name="Khouri H.M."/>
            <person name="Utterback T.R."/>
            <person name="Radune D."/>
            <person name="Ketchum K.A."/>
            <person name="Dougherty B.A."/>
            <person name="Fraser C.M."/>
        </authorList>
    </citation>
    <scope>NUCLEOTIDE SEQUENCE [LARGE SCALE GENOMIC DNA]</scope>
    <source>
        <strain>ATCC 700802 / V583</strain>
    </source>
</reference>
<proteinExistence type="inferred from homology"/>
<gene>
    <name type="ordered locus">EF_1978</name>
</gene>
<accession>Q833H5</accession>
<keyword id="KW-0227">DNA damage</keyword>
<keyword id="KW-0234">DNA repair</keyword>
<keyword id="KW-0378">Hydrolase</keyword>
<keyword id="KW-1185">Reference proteome</keyword>
<protein>
    <recommendedName>
        <fullName evidence="1">Putative 3-methyladenine DNA glycosylase</fullName>
        <ecNumber evidence="1">3.2.2.-</ecNumber>
    </recommendedName>
</protein>
<organism>
    <name type="scientific">Enterococcus faecalis (strain ATCC 700802 / V583)</name>
    <dbReference type="NCBI Taxonomy" id="226185"/>
    <lineage>
        <taxon>Bacteria</taxon>
        <taxon>Bacillati</taxon>
        <taxon>Bacillota</taxon>
        <taxon>Bacilli</taxon>
        <taxon>Lactobacillales</taxon>
        <taxon>Enterococcaceae</taxon>
        <taxon>Enterococcus</taxon>
    </lineage>
</organism>
<dbReference type="EC" id="3.2.2.-" evidence="1"/>
<dbReference type="EMBL" id="AE016830">
    <property type="protein sequence ID" value="AAO81724.1"/>
    <property type="molecule type" value="Genomic_DNA"/>
</dbReference>
<dbReference type="RefSeq" id="NP_815654.1">
    <property type="nucleotide sequence ID" value="NC_004668.1"/>
</dbReference>
<dbReference type="SMR" id="Q833H5"/>
<dbReference type="STRING" id="226185.EF_1978"/>
<dbReference type="EnsemblBacteria" id="AAO81724">
    <property type="protein sequence ID" value="AAO81724"/>
    <property type="gene ID" value="EF_1978"/>
</dbReference>
<dbReference type="KEGG" id="efa:EF1978"/>
<dbReference type="PATRIC" id="fig|226185.9.peg.1855"/>
<dbReference type="eggNOG" id="COG2094">
    <property type="taxonomic scope" value="Bacteria"/>
</dbReference>
<dbReference type="HOGENOM" id="CLU_060471_2_0_9"/>
<dbReference type="Proteomes" id="UP000001415">
    <property type="component" value="Chromosome"/>
</dbReference>
<dbReference type="GO" id="GO:0003905">
    <property type="term" value="F:alkylbase DNA N-glycosylase activity"/>
    <property type="evidence" value="ECO:0007669"/>
    <property type="project" value="InterPro"/>
</dbReference>
<dbReference type="GO" id="GO:0003677">
    <property type="term" value="F:DNA binding"/>
    <property type="evidence" value="ECO:0007669"/>
    <property type="project" value="InterPro"/>
</dbReference>
<dbReference type="GO" id="GO:0006284">
    <property type="term" value="P:base-excision repair"/>
    <property type="evidence" value="ECO:0007669"/>
    <property type="project" value="InterPro"/>
</dbReference>
<dbReference type="CDD" id="cd00540">
    <property type="entry name" value="AAG"/>
    <property type="match status" value="1"/>
</dbReference>
<dbReference type="FunFam" id="3.10.300.10:FF:000001">
    <property type="entry name" value="Putative 3-methyladenine DNA glycosylase"/>
    <property type="match status" value="1"/>
</dbReference>
<dbReference type="Gene3D" id="3.10.300.10">
    <property type="entry name" value="Methylpurine-DNA glycosylase (MPG)"/>
    <property type="match status" value="1"/>
</dbReference>
<dbReference type="HAMAP" id="MF_00527">
    <property type="entry name" value="3MGH"/>
    <property type="match status" value="1"/>
</dbReference>
<dbReference type="InterPro" id="IPR011034">
    <property type="entry name" value="Formyl_transferase-like_C_sf"/>
</dbReference>
<dbReference type="InterPro" id="IPR003180">
    <property type="entry name" value="MPG"/>
</dbReference>
<dbReference type="InterPro" id="IPR036995">
    <property type="entry name" value="MPG_sf"/>
</dbReference>
<dbReference type="NCBIfam" id="TIGR00567">
    <property type="entry name" value="3mg"/>
    <property type="match status" value="1"/>
</dbReference>
<dbReference type="PANTHER" id="PTHR10429">
    <property type="entry name" value="DNA-3-METHYLADENINE GLYCOSYLASE"/>
    <property type="match status" value="1"/>
</dbReference>
<dbReference type="PANTHER" id="PTHR10429:SF0">
    <property type="entry name" value="DNA-3-METHYLADENINE GLYCOSYLASE"/>
    <property type="match status" value="1"/>
</dbReference>
<dbReference type="Pfam" id="PF02245">
    <property type="entry name" value="Pur_DNA_glyco"/>
    <property type="match status" value="1"/>
</dbReference>
<dbReference type="SUPFAM" id="SSF50486">
    <property type="entry name" value="FMT C-terminal domain-like"/>
    <property type="match status" value="1"/>
</dbReference>
<evidence type="ECO:0000255" key="1">
    <source>
        <dbReference type="HAMAP-Rule" id="MF_00527"/>
    </source>
</evidence>
<name>3MGH_ENTFA</name>